<dbReference type="EMBL" id="CP000671">
    <property type="protein sequence ID" value="ABQ98607.1"/>
    <property type="molecule type" value="Genomic_DNA"/>
</dbReference>
<dbReference type="SMR" id="A5UCV6"/>
<dbReference type="KEGG" id="hip:CGSHiEE_06290"/>
<dbReference type="HOGENOM" id="CLU_106757_2_0_6"/>
<dbReference type="GO" id="GO:0005829">
    <property type="term" value="C:cytosol"/>
    <property type="evidence" value="ECO:0007669"/>
    <property type="project" value="TreeGrafter"/>
</dbReference>
<dbReference type="GO" id="GO:0043022">
    <property type="term" value="F:ribosome binding"/>
    <property type="evidence" value="ECO:0007669"/>
    <property type="project" value="UniProtKB-UniRule"/>
</dbReference>
<dbReference type="GO" id="GO:0019843">
    <property type="term" value="F:rRNA binding"/>
    <property type="evidence" value="ECO:0007669"/>
    <property type="project" value="UniProtKB-UniRule"/>
</dbReference>
<dbReference type="GO" id="GO:1902626">
    <property type="term" value="P:assembly of large subunit precursor of preribosome"/>
    <property type="evidence" value="ECO:0007669"/>
    <property type="project" value="UniProtKB-UniRule"/>
</dbReference>
<dbReference type="CDD" id="cd16331">
    <property type="entry name" value="YjgA-like"/>
    <property type="match status" value="1"/>
</dbReference>
<dbReference type="FunFam" id="1.10.60.30:FF:000001">
    <property type="entry name" value="UPF0307 protein YjgA"/>
    <property type="match status" value="1"/>
</dbReference>
<dbReference type="FunFam" id="1.10.60.30:FF:000002">
    <property type="entry name" value="UPF0307 protein YjgA"/>
    <property type="match status" value="1"/>
</dbReference>
<dbReference type="Gene3D" id="1.10.60.30">
    <property type="entry name" value="PSPTO4464-like domains"/>
    <property type="match status" value="2"/>
</dbReference>
<dbReference type="HAMAP" id="MF_00765">
    <property type="entry name" value="DarP"/>
    <property type="match status" value="1"/>
</dbReference>
<dbReference type="InterPro" id="IPR006839">
    <property type="entry name" value="DarP"/>
</dbReference>
<dbReference type="InterPro" id="IPR023153">
    <property type="entry name" value="DarP_sf"/>
</dbReference>
<dbReference type="NCBIfam" id="NF003593">
    <property type="entry name" value="PRK05255.1-1"/>
    <property type="match status" value="1"/>
</dbReference>
<dbReference type="PANTHER" id="PTHR38101">
    <property type="entry name" value="UPF0307 PROTEIN YJGA"/>
    <property type="match status" value="1"/>
</dbReference>
<dbReference type="PANTHER" id="PTHR38101:SF1">
    <property type="entry name" value="UPF0307 PROTEIN YJGA"/>
    <property type="match status" value="1"/>
</dbReference>
<dbReference type="Pfam" id="PF04751">
    <property type="entry name" value="DarP"/>
    <property type="match status" value="1"/>
</dbReference>
<dbReference type="PIRSF" id="PIRSF016183">
    <property type="entry name" value="UCP016183"/>
    <property type="match status" value="1"/>
</dbReference>
<dbReference type="SUPFAM" id="SSF158710">
    <property type="entry name" value="PSPTO4464-like"/>
    <property type="match status" value="1"/>
</dbReference>
<organism>
    <name type="scientific">Haemophilus influenzae (strain PittEE)</name>
    <dbReference type="NCBI Taxonomy" id="374930"/>
    <lineage>
        <taxon>Bacteria</taxon>
        <taxon>Pseudomonadati</taxon>
        <taxon>Pseudomonadota</taxon>
        <taxon>Gammaproteobacteria</taxon>
        <taxon>Pasteurellales</taxon>
        <taxon>Pasteurellaceae</taxon>
        <taxon>Haemophilus</taxon>
    </lineage>
</organism>
<comment type="function">
    <text evidence="1">Member of a network of 50S ribosomal subunit biogenesis factors which assembles along the 30S-50S interface, preventing incorrect 23S rRNA structures from forming. Promotes peptidyl transferase center (PTC) maturation.</text>
</comment>
<comment type="subcellular location">
    <subcellularLocation>
        <location evidence="1">Cytoplasm</location>
    </subcellularLocation>
    <text evidence="1">Associates with late stage pre-50S ribosomal subunits.</text>
</comment>
<comment type="similarity">
    <text evidence="1">Belongs to the DarP family.</text>
</comment>
<keyword id="KW-0963">Cytoplasm</keyword>
<keyword id="KW-0690">Ribosome biogenesis</keyword>
<keyword id="KW-0694">RNA-binding</keyword>
<keyword id="KW-0699">rRNA-binding</keyword>
<protein>
    <recommendedName>
        <fullName evidence="1">Dual-action ribosomal maturation protein DarP</fullName>
    </recommendedName>
    <alternativeName>
        <fullName evidence="1">Large ribosomal subunit assembly factor DarP</fullName>
    </alternativeName>
</protein>
<reference key="1">
    <citation type="journal article" date="2007" name="Genome Biol.">
        <title>Characterization and modeling of the Haemophilus influenzae core and supragenomes based on the complete genomic sequences of Rd and 12 clinical nontypeable strains.</title>
        <authorList>
            <person name="Hogg J.S."/>
            <person name="Hu F.Z."/>
            <person name="Janto B."/>
            <person name="Boissy R."/>
            <person name="Hayes J."/>
            <person name="Keefe R."/>
            <person name="Post J.C."/>
            <person name="Ehrlich G.D."/>
        </authorList>
    </citation>
    <scope>NUCLEOTIDE SEQUENCE [LARGE SCALE GENOMIC DNA]</scope>
    <source>
        <strain>PittEE</strain>
    </source>
</reference>
<accession>A5UCV6</accession>
<gene>
    <name evidence="1" type="primary">darP</name>
    <name type="ordered locus">CGSHiEE_06290</name>
</gene>
<sequence>MAKRKKKEVFDWEDEDQEEIIWVSKSEIKRDAEDLKQLGEKIVNLTKANLAKIPLDESLLDAIELAQRLQKEARRRQLQYIGKLFRGIDVEPIREALDKIENKHNQQQAMLHKIEKVRDELVEKGDVALTDLLNDYPNGDRQQLRNLIRSAQKELEQNKPSKAYREIYQMLKVLMLED</sequence>
<evidence type="ECO:0000255" key="1">
    <source>
        <dbReference type="HAMAP-Rule" id="MF_00765"/>
    </source>
</evidence>
<name>DARP_HAEIE</name>
<proteinExistence type="inferred from homology"/>
<feature type="chain" id="PRO_1000046798" description="Dual-action ribosomal maturation protein DarP">
    <location>
        <begin position="1"/>
        <end position="178"/>
    </location>
</feature>